<comment type="function">
    <text evidence="1">Catalyzes the anti-1,4-elimination of the C-3 phosphate and the C-6 proR hydrogen from 5-enolpyruvylshikimate-3-phosphate (EPSP) to yield chorismate, which is the branch point compound that serves as the starting substrate for the three terminal pathways of aromatic amino acid biosynthesis. This reaction introduces a second double bond into the aromatic ring system.</text>
</comment>
<comment type="catalytic activity">
    <reaction evidence="1">
        <text>5-O-(1-carboxyvinyl)-3-phosphoshikimate = chorismate + phosphate</text>
        <dbReference type="Rhea" id="RHEA:21020"/>
        <dbReference type="ChEBI" id="CHEBI:29748"/>
        <dbReference type="ChEBI" id="CHEBI:43474"/>
        <dbReference type="ChEBI" id="CHEBI:57701"/>
        <dbReference type="EC" id="4.2.3.5"/>
    </reaction>
</comment>
<comment type="cofactor">
    <cofactor evidence="1">
        <name>FMNH2</name>
        <dbReference type="ChEBI" id="CHEBI:57618"/>
    </cofactor>
    <text evidence="1">Reduced FMN (FMNH(2)).</text>
</comment>
<comment type="pathway">
    <text evidence="1">Metabolic intermediate biosynthesis; chorismate biosynthesis; chorismate from D-erythrose 4-phosphate and phosphoenolpyruvate: step 7/7.</text>
</comment>
<comment type="subunit">
    <text evidence="1">Homotetramer.</text>
</comment>
<comment type="similarity">
    <text evidence="1">Belongs to the chorismate synthase family.</text>
</comment>
<name>AROC_SHIB3</name>
<keyword id="KW-0028">Amino-acid biosynthesis</keyword>
<keyword id="KW-0057">Aromatic amino acid biosynthesis</keyword>
<keyword id="KW-0274">FAD</keyword>
<keyword id="KW-0285">Flavoprotein</keyword>
<keyword id="KW-0288">FMN</keyword>
<keyword id="KW-0456">Lyase</keyword>
<keyword id="KW-0521">NADP</keyword>
<keyword id="KW-1185">Reference proteome</keyword>
<dbReference type="EC" id="4.2.3.5" evidence="1"/>
<dbReference type="EMBL" id="CP001063">
    <property type="protein sequence ID" value="ACD08356.1"/>
    <property type="molecule type" value="Genomic_DNA"/>
</dbReference>
<dbReference type="RefSeq" id="WP_000918449.1">
    <property type="nucleotide sequence ID" value="NC_010658.1"/>
</dbReference>
<dbReference type="SMR" id="B2TWB1"/>
<dbReference type="STRING" id="344609.SbBS512_E2707"/>
<dbReference type="KEGG" id="sbc:SbBS512_E2707"/>
<dbReference type="HOGENOM" id="CLU_034547_0_2_6"/>
<dbReference type="UniPathway" id="UPA00053">
    <property type="reaction ID" value="UER00090"/>
</dbReference>
<dbReference type="Proteomes" id="UP000001030">
    <property type="component" value="Chromosome"/>
</dbReference>
<dbReference type="GO" id="GO:0005829">
    <property type="term" value="C:cytosol"/>
    <property type="evidence" value="ECO:0007669"/>
    <property type="project" value="TreeGrafter"/>
</dbReference>
<dbReference type="GO" id="GO:0004107">
    <property type="term" value="F:chorismate synthase activity"/>
    <property type="evidence" value="ECO:0007669"/>
    <property type="project" value="UniProtKB-UniRule"/>
</dbReference>
<dbReference type="GO" id="GO:0010181">
    <property type="term" value="F:FMN binding"/>
    <property type="evidence" value="ECO:0007669"/>
    <property type="project" value="TreeGrafter"/>
</dbReference>
<dbReference type="GO" id="GO:0008652">
    <property type="term" value="P:amino acid biosynthetic process"/>
    <property type="evidence" value="ECO:0007669"/>
    <property type="project" value="UniProtKB-KW"/>
</dbReference>
<dbReference type="GO" id="GO:0009073">
    <property type="term" value="P:aromatic amino acid family biosynthetic process"/>
    <property type="evidence" value="ECO:0007669"/>
    <property type="project" value="UniProtKB-KW"/>
</dbReference>
<dbReference type="GO" id="GO:0009423">
    <property type="term" value="P:chorismate biosynthetic process"/>
    <property type="evidence" value="ECO:0007669"/>
    <property type="project" value="UniProtKB-UniRule"/>
</dbReference>
<dbReference type="CDD" id="cd07304">
    <property type="entry name" value="Chorismate_synthase"/>
    <property type="match status" value="1"/>
</dbReference>
<dbReference type="FunFam" id="3.60.150.10:FF:000001">
    <property type="entry name" value="Chorismate synthase"/>
    <property type="match status" value="1"/>
</dbReference>
<dbReference type="Gene3D" id="3.60.150.10">
    <property type="entry name" value="Chorismate synthase AroC"/>
    <property type="match status" value="1"/>
</dbReference>
<dbReference type="HAMAP" id="MF_00300">
    <property type="entry name" value="Chorismate_synth"/>
    <property type="match status" value="1"/>
</dbReference>
<dbReference type="InterPro" id="IPR000453">
    <property type="entry name" value="Chorismate_synth"/>
</dbReference>
<dbReference type="InterPro" id="IPR035904">
    <property type="entry name" value="Chorismate_synth_AroC_sf"/>
</dbReference>
<dbReference type="InterPro" id="IPR020541">
    <property type="entry name" value="Chorismate_synthase_CS"/>
</dbReference>
<dbReference type="NCBIfam" id="TIGR00033">
    <property type="entry name" value="aroC"/>
    <property type="match status" value="1"/>
</dbReference>
<dbReference type="NCBIfam" id="NF003793">
    <property type="entry name" value="PRK05382.1"/>
    <property type="match status" value="1"/>
</dbReference>
<dbReference type="PANTHER" id="PTHR21085">
    <property type="entry name" value="CHORISMATE SYNTHASE"/>
    <property type="match status" value="1"/>
</dbReference>
<dbReference type="PANTHER" id="PTHR21085:SF0">
    <property type="entry name" value="CHORISMATE SYNTHASE"/>
    <property type="match status" value="1"/>
</dbReference>
<dbReference type="Pfam" id="PF01264">
    <property type="entry name" value="Chorismate_synt"/>
    <property type="match status" value="1"/>
</dbReference>
<dbReference type="PIRSF" id="PIRSF001456">
    <property type="entry name" value="Chorismate_synth"/>
    <property type="match status" value="1"/>
</dbReference>
<dbReference type="SUPFAM" id="SSF103263">
    <property type="entry name" value="Chorismate synthase, AroC"/>
    <property type="match status" value="1"/>
</dbReference>
<dbReference type="PROSITE" id="PS00787">
    <property type="entry name" value="CHORISMATE_SYNTHASE_1"/>
    <property type="match status" value="1"/>
</dbReference>
<dbReference type="PROSITE" id="PS00788">
    <property type="entry name" value="CHORISMATE_SYNTHASE_2"/>
    <property type="match status" value="1"/>
</dbReference>
<dbReference type="PROSITE" id="PS00789">
    <property type="entry name" value="CHORISMATE_SYNTHASE_3"/>
    <property type="match status" value="1"/>
</dbReference>
<evidence type="ECO:0000255" key="1">
    <source>
        <dbReference type="HAMAP-Rule" id="MF_00300"/>
    </source>
</evidence>
<proteinExistence type="inferred from homology"/>
<reference key="1">
    <citation type="submission" date="2008-05" db="EMBL/GenBank/DDBJ databases">
        <title>Complete sequence of Shigella boydii serotype 18 strain BS512.</title>
        <authorList>
            <person name="Rasko D.A."/>
            <person name="Rosovitz M."/>
            <person name="Maurelli A.T."/>
            <person name="Myers G."/>
            <person name="Seshadri R."/>
            <person name="Cer R."/>
            <person name="Jiang L."/>
            <person name="Ravel J."/>
            <person name="Sebastian Y."/>
        </authorList>
    </citation>
    <scope>NUCLEOTIDE SEQUENCE [LARGE SCALE GENOMIC DNA]</scope>
    <source>
        <strain>CDC 3083-94 / BS512</strain>
    </source>
</reference>
<protein>
    <recommendedName>
        <fullName evidence="1">Chorismate synthase</fullName>
        <shortName evidence="1">CS</shortName>
        <ecNumber evidence="1">4.2.3.5</ecNumber>
    </recommendedName>
    <alternativeName>
        <fullName evidence="1">5-enolpyruvylshikimate-3-phosphate phospholyase</fullName>
    </alternativeName>
</protein>
<accession>B2TWB1</accession>
<sequence length="361" mass="39153">MAGNTIGQLFRVTTFGESHGLALGCIVDGVPPGILLTEADLQHDLDRRRPGTSRYTTQRREPDQVKILSGVFEGVTTGTSIGLLIENTDQRSQDYSAIKDVFRPGHADYTYEQKYGLRDYRGGGRSSARETAMRVAAGAIAKKYLAEKFGIEIRGCLTQMGDIPLEIKDWSLVEQNPFFCPDPDKIDALDELMRALKKEGDSIGAKVTVVASGVPAGLGEPVFDRLDADIAHALMSINAVKGVEIGDGFDVVALRGSQNRDEITKDGFQSNHAGGILGGISSGQQIIAHMALKPTSSITVPGRTINRFGEEVEMITKGRHDPCVGIRAVPIAEAMLAIVLMDHLLRQRAQNADVKTDIPRW</sequence>
<organism>
    <name type="scientific">Shigella boydii serotype 18 (strain CDC 3083-94 / BS512)</name>
    <dbReference type="NCBI Taxonomy" id="344609"/>
    <lineage>
        <taxon>Bacteria</taxon>
        <taxon>Pseudomonadati</taxon>
        <taxon>Pseudomonadota</taxon>
        <taxon>Gammaproteobacteria</taxon>
        <taxon>Enterobacterales</taxon>
        <taxon>Enterobacteriaceae</taxon>
        <taxon>Shigella</taxon>
    </lineage>
</organism>
<gene>
    <name evidence="1" type="primary">aroC</name>
    <name type="ordered locus">SbBS512_E2707</name>
</gene>
<feature type="chain" id="PRO_1000115400" description="Chorismate synthase">
    <location>
        <begin position="1"/>
        <end position="361"/>
    </location>
</feature>
<feature type="binding site" evidence="1">
    <location>
        <position position="48"/>
    </location>
    <ligand>
        <name>NADP(+)</name>
        <dbReference type="ChEBI" id="CHEBI:58349"/>
    </ligand>
</feature>
<feature type="binding site" evidence="1">
    <location>
        <position position="54"/>
    </location>
    <ligand>
        <name>NADP(+)</name>
        <dbReference type="ChEBI" id="CHEBI:58349"/>
    </ligand>
</feature>
<feature type="binding site" evidence="1">
    <location>
        <begin position="125"/>
        <end position="127"/>
    </location>
    <ligand>
        <name>FMN</name>
        <dbReference type="ChEBI" id="CHEBI:58210"/>
    </ligand>
</feature>
<feature type="binding site" evidence="1">
    <location>
        <begin position="238"/>
        <end position="239"/>
    </location>
    <ligand>
        <name>FMN</name>
        <dbReference type="ChEBI" id="CHEBI:58210"/>
    </ligand>
</feature>
<feature type="binding site" evidence="1">
    <location>
        <position position="278"/>
    </location>
    <ligand>
        <name>FMN</name>
        <dbReference type="ChEBI" id="CHEBI:58210"/>
    </ligand>
</feature>
<feature type="binding site" evidence="1">
    <location>
        <begin position="293"/>
        <end position="297"/>
    </location>
    <ligand>
        <name>FMN</name>
        <dbReference type="ChEBI" id="CHEBI:58210"/>
    </ligand>
</feature>
<feature type="binding site" evidence="1">
    <location>
        <position position="319"/>
    </location>
    <ligand>
        <name>FMN</name>
        <dbReference type="ChEBI" id="CHEBI:58210"/>
    </ligand>
</feature>